<reference key="1">
    <citation type="journal article" date="1993" name="Plant Mol. Biol.">
        <title>Structure of a cyanobacterial gene encoding the 50S ribosomal protein L9.</title>
        <authorList>
            <person name="Malakhov M.P."/>
            <person name="Wada H."/>
            <person name="Los D.A."/>
            <person name="Sakamoto T."/>
            <person name="Murata N."/>
        </authorList>
    </citation>
    <scope>NUCLEOTIDE SEQUENCE [GENOMIC DNA]</scope>
</reference>
<reference key="2">
    <citation type="journal article" date="1996" name="DNA Res.">
        <title>Sequence analysis of the genome of the unicellular cyanobacterium Synechocystis sp. strain PCC6803. II. Sequence determination of the entire genome and assignment of potential protein-coding regions.</title>
        <authorList>
            <person name="Kaneko T."/>
            <person name="Sato S."/>
            <person name="Kotani H."/>
            <person name="Tanaka A."/>
            <person name="Asamizu E."/>
            <person name="Nakamura Y."/>
            <person name="Miyajima N."/>
            <person name="Hirosawa M."/>
            <person name="Sugiura M."/>
            <person name="Sasamoto S."/>
            <person name="Kimura T."/>
            <person name="Hosouchi T."/>
            <person name="Matsuno A."/>
            <person name="Muraki A."/>
            <person name="Nakazaki N."/>
            <person name="Naruo K."/>
            <person name="Okumura S."/>
            <person name="Shimpo S."/>
            <person name="Takeuchi C."/>
            <person name="Wada T."/>
            <person name="Watanabe A."/>
            <person name="Yamada M."/>
            <person name="Yasuda M."/>
            <person name="Tabata S."/>
        </authorList>
    </citation>
    <scope>NUCLEOTIDE SEQUENCE [LARGE SCALE GENOMIC DNA]</scope>
    <source>
        <strain>ATCC 27184 / PCC 6803 / Kazusa</strain>
    </source>
</reference>
<accession>P42350</accession>
<dbReference type="EMBL" id="D10716">
    <property type="protein sequence ID" value="BAA38818.1"/>
    <property type="molecule type" value="Genomic_DNA"/>
</dbReference>
<dbReference type="EMBL" id="BA000022">
    <property type="protein sequence ID" value="BAA18174.1"/>
    <property type="molecule type" value="Genomic_DNA"/>
</dbReference>
<dbReference type="PIR" id="S33615">
    <property type="entry name" value="S27721"/>
</dbReference>
<dbReference type="IntAct" id="P42350">
    <property type="interactions" value="5"/>
</dbReference>
<dbReference type="STRING" id="1148.gene:10499047"/>
<dbReference type="PaxDb" id="1148-1653259"/>
<dbReference type="EnsemblBacteria" id="BAA18174">
    <property type="protein sequence ID" value="BAA18174"/>
    <property type="gene ID" value="BAA18174"/>
</dbReference>
<dbReference type="KEGG" id="syn:slr1353"/>
<dbReference type="eggNOG" id="ENOG5031IQT">
    <property type="taxonomic scope" value="Bacteria"/>
</dbReference>
<dbReference type="InParanoid" id="P42350"/>
<dbReference type="Proteomes" id="UP000001425">
    <property type="component" value="Chromosome"/>
</dbReference>
<protein>
    <recommendedName>
        <fullName>Uncharacterized protein slr1353</fullName>
    </recommendedName>
</protein>
<feature type="chain" id="PRO_0000157889" description="Uncharacterized protein slr1353">
    <location>
        <begin position="1"/>
        <end position="291"/>
    </location>
</feature>
<feature type="region of interest" description="Disordered" evidence="1">
    <location>
        <begin position="77"/>
        <end position="140"/>
    </location>
</feature>
<feature type="compositionally biased region" description="Pro residues" evidence="1">
    <location>
        <begin position="125"/>
        <end position="134"/>
    </location>
</feature>
<proteinExistence type="predicted"/>
<sequence>MPMSSLISLFRQHYPQGSLCCDLLEIDRGLYIVQASITLEGIVVASALAAQSPLEAAEDLAKERAIASLDLTHISSTVPQSSPTAIVEDMEAKPSPPPSSPKKESKSPKQNHKVVTPPAIVNPTPVTPAHPPTPVVEKSPEVEAAIAPEPTLTPAPISFPPSPDPVLSLEEPTPPPAMVNSTFNQPEESAPIDSELQLDFATPELPLAVEAKPDSPEPDMAVSGATELPAGPMDFSEIIARSNLELKRLGWTSDQGRNYLLQTYGKRSRQLLSDEQLIEFLAYLEQQPDPN</sequence>
<name>Y1353_SYNY3</name>
<keyword id="KW-1185">Reference proteome</keyword>
<organism>
    <name type="scientific">Synechocystis sp. (strain ATCC 27184 / PCC 6803 / Kazusa)</name>
    <dbReference type="NCBI Taxonomy" id="1111708"/>
    <lineage>
        <taxon>Bacteria</taxon>
        <taxon>Bacillati</taxon>
        <taxon>Cyanobacteriota</taxon>
        <taxon>Cyanophyceae</taxon>
        <taxon>Synechococcales</taxon>
        <taxon>Merismopediaceae</taxon>
        <taxon>Synechocystis</taxon>
    </lineage>
</organism>
<gene>
    <name type="ordered locus">slr1353</name>
</gene>
<evidence type="ECO:0000256" key="1">
    <source>
        <dbReference type="SAM" id="MobiDB-lite"/>
    </source>
</evidence>